<organism>
    <name type="scientific">Rhizobium rhizogenes (strain K84 / ATCC BAA-868)</name>
    <name type="common">Agrobacterium radiobacter</name>
    <dbReference type="NCBI Taxonomy" id="311403"/>
    <lineage>
        <taxon>Bacteria</taxon>
        <taxon>Pseudomonadati</taxon>
        <taxon>Pseudomonadota</taxon>
        <taxon>Alphaproteobacteria</taxon>
        <taxon>Hyphomicrobiales</taxon>
        <taxon>Rhizobiaceae</taxon>
        <taxon>Rhizobium/Agrobacterium group</taxon>
        <taxon>Rhizobium</taxon>
    </lineage>
</organism>
<protein>
    <recommendedName>
        <fullName evidence="1">Acyl-[acyl-carrier-protein]--UDP-N-acetylglucosamine O-acyltransferase</fullName>
        <shortName evidence="1">UDP-N-acetylglucosamine acyltransferase</shortName>
        <ecNumber evidence="1">2.3.1.129</ecNumber>
    </recommendedName>
</protein>
<evidence type="ECO:0000255" key="1">
    <source>
        <dbReference type="HAMAP-Rule" id="MF_00387"/>
    </source>
</evidence>
<name>LPXA_RHIR8</name>
<dbReference type="EC" id="2.3.1.129" evidence="1"/>
<dbReference type="EMBL" id="CP000628">
    <property type="protein sequence ID" value="ACM26471.1"/>
    <property type="molecule type" value="Genomic_DNA"/>
</dbReference>
<dbReference type="RefSeq" id="WP_007693431.1">
    <property type="nucleotide sequence ID" value="NC_011985.1"/>
</dbReference>
<dbReference type="SMR" id="B9JEY0"/>
<dbReference type="STRING" id="311403.Arad_2232"/>
<dbReference type="GeneID" id="86848364"/>
<dbReference type="KEGG" id="ara:Arad_2232"/>
<dbReference type="eggNOG" id="COG1043">
    <property type="taxonomic scope" value="Bacteria"/>
</dbReference>
<dbReference type="HOGENOM" id="CLU_061249_0_0_5"/>
<dbReference type="UniPathway" id="UPA00359">
    <property type="reaction ID" value="UER00477"/>
</dbReference>
<dbReference type="Proteomes" id="UP000001600">
    <property type="component" value="Chromosome 1"/>
</dbReference>
<dbReference type="GO" id="GO:0005737">
    <property type="term" value="C:cytoplasm"/>
    <property type="evidence" value="ECO:0007669"/>
    <property type="project" value="UniProtKB-SubCell"/>
</dbReference>
<dbReference type="GO" id="GO:0016020">
    <property type="term" value="C:membrane"/>
    <property type="evidence" value="ECO:0007669"/>
    <property type="project" value="GOC"/>
</dbReference>
<dbReference type="GO" id="GO:0008780">
    <property type="term" value="F:acyl-[acyl-carrier-protein]-UDP-N-acetylglucosamine O-acyltransferase activity"/>
    <property type="evidence" value="ECO:0007669"/>
    <property type="project" value="UniProtKB-UniRule"/>
</dbReference>
<dbReference type="GO" id="GO:0009245">
    <property type="term" value="P:lipid A biosynthetic process"/>
    <property type="evidence" value="ECO:0007669"/>
    <property type="project" value="UniProtKB-UniRule"/>
</dbReference>
<dbReference type="CDD" id="cd03351">
    <property type="entry name" value="LbH_UDP-GlcNAc_AT"/>
    <property type="match status" value="1"/>
</dbReference>
<dbReference type="Gene3D" id="2.160.10.10">
    <property type="entry name" value="Hexapeptide repeat proteins"/>
    <property type="match status" value="1"/>
</dbReference>
<dbReference type="Gene3D" id="1.20.1180.10">
    <property type="entry name" value="Udp N-acetylglucosamine O-acyltransferase, C-terminal domain"/>
    <property type="match status" value="1"/>
</dbReference>
<dbReference type="HAMAP" id="MF_00387">
    <property type="entry name" value="LpxA"/>
    <property type="match status" value="1"/>
</dbReference>
<dbReference type="InterPro" id="IPR029098">
    <property type="entry name" value="Acetyltransf_C"/>
</dbReference>
<dbReference type="InterPro" id="IPR037157">
    <property type="entry name" value="Acetyltransf_C_sf"/>
</dbReference>
<dbReference type="InterPro" id="IPR001451">
    <property type="entry name" value="Hexapep"/>
</dbReference>
<dbReference type="InterPro" id="IPR010137">
    <property type="entry name" value="Lipid_A_LpxA"/>
</dbReference>
<dbReference type="InterPro" id="IPR011004">
    <property type="entry name" value="Trimer_LpxA-like_sf"/>
</dbReference>
<dbReference type="NCBIfam" id="TIGR01852">
    <property type="entry name" value="lipid_A_lpxA"/>
    <property type="match status" value="1"/>
</dbReference>
<dbReference type="NCBIfam" id="NF003657">
    <property type="entry name" value="PRK05289.1"/>
    <property type="match status" value="1"/>
</dbReference>
<dbReference type="PANTHER" id="PTHR43480">
    <property type="entry name" value="ACYL-[ACYL-CARRIER-PROTEIN]--UDP-N-ACETYLGLUCOSAMINE O-ACYLTRANSFERASE"/>
    <property type="match status" value="1"/>
</dbReference>
<dbReference type="PANTHER" id="PTHR43480:SF1">
    <property type="entry name" value="ACYL-[ACYL-CARRIER-PROTEIN]--UDP-N-ACETYLGLUCOSAMINE O-ACYLTRANSFERASE, MITOCHONDRIAL-RELATED"/>
    <property type="match status" value="1"/>
</dbReference>
<dbReference type="Pfam" id="PF13720">
    <property type="entry name" value="Acetyltransf_11"/>
    <property type="match status" value="1"/>
</dbReference>
<dbReference type="Pfam" id="PF00132">
    <property type="entry name" value="Hexapep"/>
    <property type="match status" value="2"/>
</dbReference>
<dbReference type="PIRSF" id="PIRSF000456">
    <property type="entry name" value="UDP-GlcNAc_acltr"/>
    <property type="match status" value="1"/>
</dbReference>
<dbReference type="SUPFAM" id="SSF51161">
    <property type="entry name" value="Trimeric LpxA-like enzymes"/>
    <property type="match status" value="1"/>
</dbReference>
<comment type="function">
    <text evidence="1">Involved in the biosynthesis of lipid A, a phosphorylated glycolipid that anchors the lipopolysaccharide to the outer membrane of the cell.</text>
</comment>
<comment type="catalytic activity">
    <reaction evidence="1">
        <text>a (3R)-hydroxyacyl-[ACP] + UDP-N-acetyl-alpha-D-glucosamine = a UDP-3-O-[(3R)-3-hydroxyacyl]-N-acetyl-alpha-D-glucosamine + holo-[ACP]</text>
        <dbReference type="Rhea" id="RHEA:67812"/>
        <dbReference type="Rhea" id="RHEA-COMP:9685"/>
        <dbReference type="Rhea" id="RHEA-COMP:9945"/>
        <dbReference type="ChEBI" id="CHEBI:57705"/>
        <dbReference type="ChEBI" id="CHEBI:64479"/>
        <dbReference type="ChEBI" id="CHEBI:78827"/>
        <dbReference type="ChEBI" id="CHEBI:173225"/>
        <dbReference type="EC" id="2.3.1.129"/>
    </reaction>
</comment>
<comment type="pathway">
    <text evidence="1">Glycolipid biosynthesis; lipid IV(A) biosynthesis; lipid IV(A) from (3R)-3-hydroxytetradecanoyl-[acyl-carrier-protein] and UDP-N-acetyl-alpha-D-glucosamine: step 1/6.</text>
</comment>
<comment type="subunit">
    <text evidence="1">Homotrimer.</text>
</comment>
<comment type="subcellular location">
    <subcellularLocation>
        <location evidence="1">Cytoplasm</location>
    </subcellularLocation>
</comment>
<comment type="similarity">
    <text evidence="1">Belongs to the transferase hexapeptide repeat family. LpxA subfamily.</text>
</comment>
<accession>B9JEY0</accession>
<gene>
    <name evidence="1" type="primary">lpxA</name>
    <name type="ordered locus">Arad_2232</name>
</gene>
<proteinExistence type="inferred from homology"/>
<keyword id="KW-0012">Acyltransferase</keyword>
<keyword id="KW-0963">Cytoplasm</keyword>
<keyword id="KW-0441">Lipid A biosynthesis</keyword>
<keyword id="KW-0444">Lipid biosynthesis</keyword>
<keyword id="KW-0443">Lipid metabolism</keyword>
<keyword id="KW-0677">Repeat</keyword>
<keyword id="KW-0808">Transferase</keyword>
<sequence>MSSIAKSARIHKLAVVEDGAVIGENVVVGPFCHVGPKVVLHDSVQLLTHVVVTGRTTIGKGTKIFPMAVVGGDPQSVHHGGEETTLDIGENCTIREGVTINTGTADYGGKTVVGNNNLFLANSHVAHDCRVGNNVIMSNNVMLAGHVTVEDRAILGGGCAVHQFTRIGRQAFVGGLSAASYDVIPYGMLNGNPGVLSGLNIVGMTRAGIERSVIHRVRRAYKSIFEGEGSIRDNATAIREEYADCKEAMEILDFIAADSDRALSSPNRGKG</sequence>
<feature type="chain" id="PRO_1000134376" description="Acyl-[acyl-carrier-protein]--UDP-N-acetylglucosamine O-acyltransferase">
    <location>
        <begin position="1"/>
        <end position="271"/>
    </location>
</feature>
<reference key="1">
    <citation type="journal article" date="2009" name="J. Bacteriol.">
        <title>Genome sequences of three Agrobacterium biovars help elucidate the evolution of multichromosome genomes in bacteria.</title>
        <authorList>
            <person name="Slater S.C."/>
            <person name="Goldman B.S."/>
            <person name="Goodner B."/>
            <person name="Setubal J.C."/>
            <person name="Farrand S.K."/>
            <person name="Nester E.W."/>
            <person name="Burr T.J."/>
            <person name="Banta L."/>
            <person name="Dickerman A.W."/>
            <person name="Paulsen I."/>
            <person name="Otten L."/>
            <person name="Suen G."/>
            <person name="Welch R."/>
            <person name="Almeida N.F."/>
            <person name="Arnold F."/>
            <person name="Burton O.T."/>
            <person name="Du Z."/>
            <person name="Ewing A."/>
            <person name="Godsy E."/>
            <person name="Heisel S."/>
            <person name="Houmiel K.L."/>
            <person name="Jhaveri J."/>
            <person name="Lu J."/>
            <person name="Miller N.M."/>
            <person name="Norton S."/>
            <person name="Chen Q."/>
            <person name="Phoolcharoen W."/>
            <person name="Ohlin V."/>
            <person name="Ondrusek D."/>
            <person name="Pride N."/>
            <person name="Stricklin S.L."/>
            <person name="Sun J."/>
            <person name="Wheeler C."/>
            <person name="Wilson L."/>
            <person name="Zhu H."/>
            <person name="Wood D.W."/>
        </authorList>
    </citation>
    <scope>NUCLEOTIDE SEQUENCE [LARGE SCALE GENOMIC DNA]</scope>
    <source>
        <strain>K84 / ATCC BAA-868</strain>
    </source>
</reference>